<feature type="chain" id="PRO_1000000096" description="Ribosome-binding factor A">
    <location>
        <begin position="1"/>
        <end position="120"/>
    </location>
</feature>
<keyword id="KW-0963">Cytoplasm</keyword>
<keyword id="KW-0690">Ribosome biogenesis</keyword>
<name>RBFA_CLOBL</name>
<gene>
    <name evidence="1" type="primary">rbfA</name>
    <name type="ordered locus">CLI_2473</name>
</gene>
<sequence length="120" mass="13682">MAKYRAGRINEEVKKEVSNIIHNDIKDPRLSAMVSVTDVNVTKDLKYAKVYVSIFGNEKAKEESLQALKSSVGFIRKEVGRRVKLRNTPEVIIEVDNSIERGMHIDELLHSIKENESNDN</sequence>
<reference key="1">
    <citation type="submission" date="2007-06" db="EMBL/GenBank/DDBJ databases">
        <authorList>
            <person name="Brinkac L.M."/>
            <person name="Daugherty S."/>
            <person name="Dodson R.J."/>
            <person name="Madupu R."/>
            <person name="Brown J.L."/>
            <person name="Bruce D."/>
            <person name="Detter C."/>
            <person name="Munk C."/>
            <person name="Smith L.A."/>
            <person name="Smith T.J."/>
            <person name="White O."/>
            <person name="Brettin T.S."/>
        </authorList>
    </citation>
    <scope>NUCLEOTIDE SEQUENCE [LARGE SCALE GENOMIC DNA]</scope>
    <source>
        <strain>Langeland / NCTC 10281 / Type F</strain>
    </source>
</reference>
<comment type="function">
    <text evidence="1">One of several proteins that assist in the late maturation steps of the functional core of the 30S ribosomal subunit. Associates with free 30S ribosomal subunits (but not with 30S subunits that are part of 70S ribosomes or polysomes). Required for efficient processing of 16S rRNA. May interact with the 5'-terminal helix region of 16S rRNA.</text>
</comment>
<comment type="subunit">
    <text evidence="1">Monomer. Binds 30S ribosomal subunits, but not 50S ribosomal subunits or 70S ribosomes.</text>
</comment>
<comment type="subcellular location">
    <subcellularLocation>
        <location evidence="1">Cytoplasm</location>
    </subcellularLocation>
</comment>
<comment type="similarity">
    <text evidence="1">Belongs to the RbfA family.</text>
</comment>
<dbReference type="EMBL" id="CP000728">
    <property type="protein sequence ID" value="ABS39533.1"/>
    <property type="molecule type" value="Genomic_DNA"/>
</dbReference>
<dbReference type="RefSeq" id="WP_003362558.1">
    <property type="nucleotide sequence ID" value="NC_009699.1"/>
</dbReference>
<dbReference type="SMR" id="A7GG05"/>
<dbReference type="KEGG" id="cbf:CLI_2473"/>
<dbReference type="HOGENOM" id="CLU_089475_6_3_9"/>
<dbReference type="Proteomes" id="UP000002410">
    <property type="component" value="Chromosome"/>
</dbReference>
<dbReference type="GO" id="GO:0005829">
    <property type="term" value="C:cytosol"/>
    <property type="evidence" value="ECO:0007669"/>
    <property type="project" value="TreeGrafter"/>
</dbReference>
<dbReference type="GO" id="GO:0043024">
    <property type="term" value="F:ribosomal small subunit binding"/>
    <property type="evidence" value="ECO:0007669"/>
    <property type="project" value="TreeGrafter"/>
</dbReference>
<dbReference type="GO" id="GO:0030490">
    <property type="term" value="P:maturation of SSU-rRNA"/>
    <property type="evidence" value="ECO:0007669"/>
    <property type="project" value="UniProtKB-UniRule"/>
</dbReference>
<dbReference type="FunFam" id="3.30.300.20:FF:000030">
    <property type="entry name" value="Ribosome-binding factor A"/>
    <property type="match status" value="1"/>
</dbReference>
<dbReference type="Gene3D" id="3.30.300.20">
    <property type="match status" value="1"/>
</dbReference>
<dbReference type="HAMAP" id="MF_00003">
    <property type="entry name" value="RbfA"/>
    <property type="match status" value="1"/>
</dbReference>
<dbReference type="InterPro" id="IPR015946">
    <property type="entry name" value="KH_dom-like_a/b"/>
</dbReference>
<dbReference type="InterPro" id="IPR000238">
    <property type="entry name" value="RbfA"/>
</dbReference>
<dbReference type="InterPro" id="IPR023799">
    <property type="entry name" value="RbfA_dom_sf"/>
</dbReference>
<dbReference type="InterPro" id="IPR020053">
    <property type="entry name" value="Ribosome-bd_factorA_CS"/>
</dbReference>
<dbReference type="NCBIfam" id="TIGR00082">
    <property type="entry name" value="rbfA"/>
    <property type="match status" value="1"/>
</dbReference>
<dbReference type="PANTHER" id="PTHR33515">
    <property type="entry name" value="RIBOSOME-BINDING FACTOR A, CHLOROPLASTIC-RELATED"/>
    <property type="match status" value="1"/>
</dbReference>
<dbReference type="PANTHER" id="PTHR33515:SF1">
    <property type="entry name" value="RIBOSOME-BINDING FACTOR A, CHLOROPLASTIC-RELATED"/>
    <property type="match status" value="1"/>
</dbReference>
<dbReference type="Pfam" id="PF02033">
    <property type="entry name" value="RBFA"/>
    <property type="match status" value="1"/>
</dbReference>
<dbReference type="SUPFAM" id="SSF89919">
    <property type="entry name" value="Ribosome-binding factor A, RbfA"/>
    <property type="match status" value="1"/>
</dbReference>
<dbReference type="PROSITE" id="PS01319">
    <property type="entry name" value="RBFA"/>
    <property type="match status" value="1"/>
</dbReference>
<protein>
    <recommendedName>
        <fullName evidence="1">Ribosome-binding factor A</fullName>
    </recommendedName>
</protein>
<proteinExistence type="inferred from homology"/>
<organism>
    <name type="scientific">Clostridium botulinum (strain Langeland / NCTC 10281 / Type F)</name>
    <dbReference type="NCBI Taxonomy" id="441772"/>
    <lineage>
        <taxon>Bacteria</taxon>
        <taxon>Bacillati</taxon>
        <taxon>Bacillota</taxon>
        <taxon>Clostridia</taxon>
        <taxon>Eubacteriales</taxon>
        <taxon>Clostridiaceae</taxon>
        <taxon>Clostridium</taxon>
    </lineage>
</organism>
<accession>A7GG05</accession>
<evidence type="ECO:0000255" key="1">
    <source>
        <dbReference type="HAMAP-Rule" id="MF_00003"/>
    </source>
</evidence>